<sequence length="20" mass="2255">ELPVNFYALNLTADNINIGY</sequence>
<feature type="chain" id="PRO_0000079667" description="35 kDa cell wall protein">
    <location>
        <begin position="1"/>
        <end position="20" status="greater than"/>
    </location>
</feature>
<feature type="non-terminal residue" evidence="2">
    <location>
        <position position="20"/>
    </location>
</feature>
<evidence type="ECO:0000269" key="1">
    <source>
    </source>
</evidence>
<evidence type="ECO:0000303" key="2">
    <source>
    </source>
</evidence>
<evidence type="ECO:0000305" key="3"/>
<proteinExistence type="evidence at protein level"/>
<organism>
    <name type="scientific">Phaseolus vulgaris</name>
    <name type="common">Kidney bean</name>
    <name type="synonym">French bean</name>
    <dbReference type="NCBI Taxonomy" id="3885"/>
    <lineage>
        <taxon>Eukaryota</taxon>
        <taxon>Viridiplantae</taxon>
        <taxon>Streptophyta</taxon>
        <taxon>Embryophyta</taxon>
        <taxon>Tracheophyta</taxon>
        <taxon>Spermatophyta</taxon>
        <taxon>Magnoliopsida</taxon>
        <taxon>eudicotyledons</taxon>
        <taxon>Gunneridae</taxon>
        <taxon>Pentapetalae</taxon>
        <taxon>rosids</taxon>
        <taxon>fabids</taxon>
        <taxon>Fabales</taxon>
        <taxon>Fabaceae</taxon>
        <taxon>Papilionoideae</taxon>
        <taxon>50 kb inversion clade</taxon>
        <taxon>NPAAA clade</taxon>
        <taxon>indigoferoid/millettioid clade</taxon>
        <taxon>Phaseoleae</taxon>
        <taxon>Phaseolus</taxon>
    </lineage>
</organism>
<keyword id="KW-0134">Cell wall</keyword>
<keyword id="KW-0903">Direct protein sequencing</keyword>
<keyword id="KW-0964">Secreted</keyword>
<accession>P80771</accession>
<dbReference type="GO" id="GO:0005576">
    <property type="term" value="C:extracellular region"/>
    <property type="evidence" value="ECO:0007669"/>
    <property type="project" value="UniProtKB-KW"/>
</dbReference>
<name>CWP12_PHAVU</name>
<comment type="subcellular location">
    <subcellularLocation>
        <location evidence="1">Secreted</location>
        <location evidence="1">Cell wall</location>
    </subcellularLocation>
</comment>
<reference evidence="3" key="1">
    <citation type="journal article" date="1997" name="J. Biol. Chem.">
        <title>Differential extraction and protein sequencing reveals major differences in patterns of primary cell wall proteins from plants.</title>
        <authorList>
            <person name="Robertson D."/>
            <person name="Mitchell G.P."/>
            <person name="Gilroy J.S."/>
            <person name="Gerrish C."/>
            <person name="Bolwell G.P."/>
            <person name="Slabas A.R."/>
        </authorList>
    </citation>
    <scope>PROTEIN SEQUENCE</scope>
    <scope>SUBCELLULAR LOCATION</scope>
</reference>
<protein>
    <recommendedName>
        <fullName>35 kDa cell wall protein</fullName>
    </recommendedName>
</protein>